<accession>Q15PF0</accession>
<proteinExistence type="inferred from homology"/>
<sequence length="397" mass="43633">MKFVDEAEIRVEAGDGGAGTVSFRREKYVPDGGPDGGDGGDGGSVYLVADENLNTLIDYRFERFHRAERGKNGQSADCTGRKGADLEVKVPVGTRATDTETGELLGDLTKHGQRLKAAQGGYHGLGNARFKTSTNRAPRQKTLGTPGDVRMLKLELMLLADVGLLGMPNAGKSTFIRSVSAAKPKVADYPFTTLVPNLGVVRLDAMSSFVIADIPGLIEGASEGAGLGIQFLKHLERCRVLLHLIDLMPADGSDPVDNAKAIVTELEKYSPKLAAKPRWLVFNKVDLMFEDEAQDLCKKIADAMNWEGEYYSISAVQGKNTKELCIKVMDFIESLPEDAIEESDDEEVGFKWDTYHKETVENYEDDDDFDDDDDDDFDGDDDDDFDGDDDFEVIYQK</sequence>
<comment type="function">
    <text evidence="1">An essential GTPase which binds GTP, GDP and possibly (p)ppGpp with moderate affinity, with high nucleotide exchange rates and a fairly low GTP hydrolysis rate. Plays a role in control of the cell cycle, stress response, ribosome biogenesis and in those bacteria that undergo differentiation, in morphogenesis control.</text>
</comment>
<comment type="cofactor">
    <cofactor evidence="1">
        <name>Mg(2+)</name>
        <dbReference type="ChEBI" id="CHEBI:18420"/>
    </cofactor>
</comment>
<comment type="subunit">
    <text evidence="1">Monomer.</text>
</comment>
<comment type="subcellular location">
    <subcellularLocation>
        <location evidence="1">Cytoplasm</location>
    </subcellularLocation>
</comment>
<comment type="similarity">
    <text evidence="1">Belongs to the TRAFAC class OBG-HflX-like GTPase superfamily. OBG GTPase family.</text>
</comment>
<name>OBG_PSEA6</name>
<evidence type="ECO:0000255" key="1">
    <source>
        <dbReference type="HAMAP-Rule" id="MF_01454"/>
    </source>
</evidence>
<evidence type="ECO:0000255" key="2">
    <source>
        <dbReference type="PROSITE-ProRule" id="PRU01231"/>
    </source>
</evidence>
<evidence type="ECO:0000256" key="3">
    <source>
        <dbReference type="SAM" id="MobiDB-lite"/>
    </source>
</evidence>
<gene>
    <name evidence="1" type="primary">obg</name>
    <name type="ordered locus">Patl_3736</name>
</gene>
<protein>
    <recommendedName>
        <fullName evidence="1">GTPase Obg</fullName>
        <ecNumber evidence="1">3.6.5.-</ecNumber>
    </recommendedName>
    <alternativeName>
        <fullName evidence="1">GTP-binding protein Obg</fullName>
    </alternativeName>
</protein>
<dbReference type="EC" id="3.6.5.-" evidence="1"/>
<dbReference type="EMBL" id="CP000388">
    <property type="protein sequence ID" value="ABG42238.1"/>
    <property type="molecule type" value="Genomic_DNA"/>
</dbReference>
<dbReference type="RefSeq" id="WP_011576455.1">
    <property type="nucleotide sequence ID" value="NC_008228.1"/>
</dbReference>
<dbReference type="SMR" id="Q15PF0"/>
<dbReference type="STRING" id="342610.Patl_3736"/>
<dbReference type="KEGG" id="pat:Patl_3736"/>
<dbReference type="eggNOG" id="COG0536">
    <property type="taxonomic scope" value="Bacteria"/>
</dbReference>
<dbReference type="HOGENOM" id="CLU_011747_2_0_6"/>
<dbReference type="OrthoDB" id="9807318at2"/>
<dbReference type="Proteomes" id="UP000001981">
    <property type="component" value="Chromosome"/>
</dbReference>
<dbReference type="GO" id="GO:0005737">
    <property type="term" value="C:cytoplasm"/>
    <property type="evidence" value="ECO:0007669"/>
    <property type="project" value="UniProtKB-SubCell"/>
</dbReference>
<dbReference type="GO" id="GO:0005525">
    <property type="term" value="F:GTP binding"/>
    <property type="evidence" value="ECO:0007669"/>
    <property type="project" value="UniProtKB-UniRule"/>
</dbReference>
<dbReference type="GO" id="GO:0003924">
    <property type="term" value="F:GTPase activity"/>
    <property type="evidence" value="ECO:0007669"/>
    <property type="project" value="UniProtKB-UniRule"/>
</dbReference>
<dbReference type="GO" id="GO:0000287">
    <property type="term" value="F:magnesium ion binding"/>
    <property type="evidence" value="ECO:0007669"/>
    <property type="project" value="InterPro"/>
</dbReference>
<dbReference type="GO" id="GO:0042254">
    <property type="term" value="P:ribosome biogenesis"/>
    <property type="evidence" value="ECO:0007669"/>
    <property type="project" value="UniProtKB-UniRule"/>
</dbReference>
<dbReference type="CDD" id="cd01898">
    <property type="entry name" value="Obg"/>
    <property type="match status" value="1"/>
</dbReference>
<dbReference type="FunFam" id="2.70.210.12:FF:000001">
    <property type="entry name" value="GTPase Obg"/>
    <property type="match status" value="1"/>
</dbReference>
<dbReference type="Gene3D" id="2.70.210.12">
    <property type="entry name" value="GTP1/OBG domain"/>
    <property type="match status" value="1"/>
</dbReference>
<dbReference type="Gene3D" id="3.40.50.300">
    <property type="entry name" value="P-loop containing nucleotide triphosphate hydrolases"/>
    <property type="match status" value="1"/>
</dbReference>
<dbReference type="HAMAP" id="MF_01454">
    <property type="entry name" value="GTPase_Obg"/>
    <property type="match status" value="1"/>
</dbReference>
<dbReference type="InterPro" id="IPR031167">
    <property type="entry name" value="G_OBG"/>
</dbReference>
<dbReference type="InterPro" id="IPR006073">
    <property type="entry name" value="GTP-bd"/>
</dbReference>
<dbReference type="InterPro" id="IPR014100">
    <property type="entry name" value="GTP-bd_Obg/CgtA"/>
</dbReference>
<dbReference type="InterPro" id="IPR006074">
    <property type="entry name" value="GTP1-OBG_CS"/>
</dbReference>
<dbReference type="InterPro" id="IPR006169">
    <property type="entry name" value="GTP1_OBG_dom"/>
</dbReference>
<dbReference type="InterPro" id="IPR036726">
    <property type="entry name" value="GTP1_OBG_dom_sf"/>
</dbReference>
<dbReference type="InterPro" id="IPR045086">
    <property type="entry name" value="OBG_GTPase"/>
</dbReference>
<dbReference type="InterPro" id="IPR027417">
    <property type="entry name" value="P-loop_NTPase"/>
</dbReference>
<dbReference type="NCBIfam" id="TIGR02729">
    <property type="entry name" value="Obg_CgtA"/>
    <property type="match status" value="1"/>
</dbReference>
<dbReference type="NCBIfam" id="NF008955">
    <property type="entry name" value="PRK12297.1"/>
    <property type="match status" value="1"/>
</dbReference>
<dbReference type="NCBIfam" id="NF008956">
    <property type="entry name" value="PRK12299.1"/>
    <property type="match status" value="1"/>
</dbReference>
<dbReference type="PANTHER" id="PTHR11702">
    <property type="entry name" value="DEVELOPMENTALLY REGULATED GTP-BINDING PROTEIN-RELATED"/>
    <property type="match status" value="1"/>
</dbReference>
<dbReference type="PANTHER" id="PTHR11702:SF31">
    <property type="entry name" value="MITOCHONDRIAL RIBOSOME-ASSOCIATED GTPASE 2"/>
    <property type="match status" value="1"/>
</dbReference>
<dbReference type="Pfam" id="PF01018">
    <property type="entry name" value="GTP1_OBG"/>
    <property type="match status" value="1"/>
</dbReference>
<dbReference type="Pfam" id="PF01926">
    <property type="entry name" value="MMR_HSR1"/>
    <property type="match status" value="1"/>
</dbReference>
<dbReference type="PIRSF" id="PIRSF002401">
    <property type="entry name" value="GTP_bd_Obg/CgtA"/>
    <property type="match status" value="1"/>
</dbReference>
<dbReference type="PRINTS" id="PR00326">
    <property type="entry name" value="GTP1OBG"/>
</dbReference>
<dbReference type="SUPFAM" id="SSF82051">
    <property type="entry name" value="Obg GTP-binding protein N-terminal domain"/>
    <property type="match status" value="1"/>
</dbReference>
<dbReference type="SUPFAM" id="SSF52540">
    <property type="entry name" value="P-loop containing nucleoside triphosphate hydrolases"/>
    <property type="match status" value="1"/>
</dbReference>
<dbReference type="PROSITE" id="PS51710">
    <property type="entry name" value="G_OBG"/>
    <property type="match status" value="1"/>
</dbReference>
<dbReference type="PROSITE" id="PS00905">
    <property type="entry name" value="GTP1_OBG"/>
    <property type="match status" value="1"/>
</dbReference>
<dbReference type="PROSITE" id="PS51883">
    <property type="entry name" value="OBG"/>
    <property type="match status" value="1"/>
</dbReference>
<keyword id="KW-0963">Cytoplasm</keyword>
<keyword id="KW-0342">GTP-binding</keyword>
<keyword id="KW-0378">Hydrolase</keyword>
<keyword id="KW-0460">Magnesium</keyword>
<keyword id="KW-0479">Metal-binding</keyword>
<keyword id="KW-0547">Nucleotide-binding</keyword>
<organism>
    <name type="scientific">Pseudoalteromonas atlantica (strain T6c / ATCC BAA-1087)</name>
    <dbReference type="NCBI Taxonomy" id="3042615"/>
    <lineage>
        <taxon>Bacteria</taxon>
        <taxon>Pseudomonadati</taxon>
        <taxon>Pseudomonadota</taxon>
        <taxon>Gammaproteobacteria</taxon>
        <taxon>Alteromonadales</taxon>
        <taxon>Alteromonadaceae</taxon>
        <taxon>Paraglaciecola</taxon>
    </lineage>
</organism>
<feature type="chain" id="PRO_0000386148" description="GTPase Obg">
    <location>
        <begin position="1"/>
        <end position="397"/>
    </location>
</feature>
<feature type="domain" description="Obg" evidence="2">
    <location>
        <begin position="1"/>
        <end position="159"/>
    </location>
</feature>
<feature type="domain" description="OBG-type G" evidence="1">
    <location>
        <begin position="160"/>
        <end position="333"/>
    </location>
</feature>
<feature type="region of interest" description="Disordered" evidence="3">
    <location>
        <begin position="22"/>
        <end position="44"/>
    </location>
</feature>
<feature type="region of interest" description="Disordered" evidence="3">
    <location>
        <begin position="359"/>
        <end position="389"/>
    </location>
</feature>
<feature type="compositionally biased region" description="Gly residues" evidence="3">
    <location>
        <begin position="33"/>
        <end position="43"/>
    </location>
</feature>
<feature type="compositionally biased region" description="Acidic residues" evidence="3">
    <location>
        <begin position="361"/>
        <end position="389"/>
    </location>
</feature>
<feature type="binding site" evidence="1">
    <location>
        <begin position="166"/>
        <end position="173"/>
    </location>
    <ligand>
        <name>GTP</name>
        <dbReference type="ChEBI" id="CHEBI:37565"/>
    </ligand>
</feature>
<feature type="binding site" evidence="1">
    <location>
        <position position="173"/>
    </location>
    <ligand>
        <name>Mg(2+)</name>
        <dbReference type="ChEBI" id="CHEBI:18420"/>
    </ligand>
</feature>
<feature type="binding site" evidence="1">
    <location>
        <begin position="191"/>
        <end position="195"/>
    </location>
    <ligand>
        <name>GTP</name>
        <dbReference type="ChEBI" id="CHEBI:37565"/>
    </ligand>
</feature>
<feature type="binding site" evidence="1">
    <location>
        <position position="193"/>
    </location>
    <ligand>
        <name>Mg(2+)</name>
        <dbReference type="ChEBI" id="CHEBI:18420"/>
    </ligand>
</feature>
<feature type="binding site" evidence="1">
    <location>
        <begin position="213"/>
        <end position="216"/>
    </location>
    <ligand>
        <name>GTP</name>
        <dbReference type="ChEBI" id="CHEBI:37565"/>
    </ligand>
</feature>
<feature type="binding site" evidence="1">
    <location>
        <begin position="283"/>
        <end position="286"/>
    </location>
    <ligand>
        <name>GTP</name>
        <dbReference type="ChEBI" id="CHEBI:37565"/>
    </ligand>
</feature>
<feature type="binding site" evidence="1">
    <location>
        <begin position="314"/>
        <end position="316"/>
    </location>
    <ligand>
        <name>GTP</name>
        <dbReference type="ChEBI" id="CHEBI:37565"/>
    </ligand>
</feature>
<reference key="1">
    <citation type="submission" date="2006-06" db="EMBL/GenBank/DDBJ databases">
        <title>Complete sequence of Pseudoalteromonas atlantica T6c.</title>
        <authorList>
            <consortium name="US DOE Joint Genome Institute"/>
            <person name="Copeland A."/>
            <person name="Lucas S."/>
            <person name="Lapidus A."/>
            <person name="Barry K."/>
            <person name="Detter J.C."/>
            <person name="Glavina del Rio T."/>
            <person name="Hammon N."/>
            <person name="Israni S."/>
            <person name="Dalin E."/>
            <person name="Tice H."/>
            <person name="Pitluck S."/>
            <person name="Saunders E."/>
            <person name="Brettin T."/>
            <person name="Bruce D."/>
            <person name="Han C."/>
            <person name="Tapia R."/>
            <person name="Gilna P."/>
            <person name="Schmutz J."/>
            <person name="Larimer F."/>
            <person name="Land M."/>
            <person name="Hauser L."/>
            <person name="Kyrpides N."/>
            <person name="Kim E."/>
            <person name="Karls A.C."/>
            <person name="Bartlett D."/>
            <person name="Higgins B.P."/>
            <person name="Richardson P."/>
        </authorList>
    </citation>
    <scope>NUCLEOTIDE SEQUENCE [LARGE SCALE GENOMIC DNA]</scope>
    <source>
        <strain>T6c / ATCC BAA-1087</strain>
    </source>
</reference>